<accession>Q84WV6</accession>
<accession>O23245</accession>
<accession>O65520</accession>
<accession>Q56WA8</accession>
<accession>Q9C5D9</accession>
<organism evidence="15">
    <name type="scientific">Arabidopsis thaliana</name>
    <name type="common">Mouse-ear cress</name>
    <dbReference type="NCBI Taxonomy" id="3702"/>
    <lineage>
        <taxon>Eukaryota</taxon>
        <taxon>Viridiplantae</taxon>
        <taxon>Streptophyta</taxon>
        <taxon>Embryophyta</taxon>
        <taxon>Tracheophyta</taxon>
        <taxon>Spermatophyta</taxon>
        <taxon>Magnoliopsida</taxon>
        <taxon>eudicotyledons</taxon>
        <taxon>Gunneridae</taxon>
        <taxon>Pentapetalae</taxon>
        <taxon>rosids</taxon>
        <taxon>malvids</taxon>
        <taxon>Brassicales</taxon>
        <taxon>Brassicaceae</taxon>
        <taxon>Camelineae</taxon>
        <taxon>Arabidopsis</taxon>
    </lineage>
</organism>
<gene>
    <name evidence="12" type="primary">MORC1</name>
    <name evidence="11" type="synonym">CRT1</name>
    <name evidence="14" type="ordered locus">At4g36290</name>
    <name evidence="17" type="ORF">C7A10.1020</name>
    <name evidence="16" type="ORF">F23E13.180</name>
</gene>
<comment type="function">
    <text evidence="4 5 6 7 8 10">Mediator of defense signaling triggered by distinct classes of R proteins. Required during hypersensitive response (HR) that confers disease resistance to turnip crinkle virus (TCV). Exhibits ATPase activity (PubMed:18191794, PubMed:19704828). Contributes to resistance against Pseudomonas syringae and Hyaloperonospora arabidopsidis, at early stages prior to cytosolic calcium ions Ca(2+) accumulation (PubMed:20332379). Required for pathogen-associated molecular pattern (PAMP)-triggered immunity (PTI), basal resistance, non-host resistance and systemic acquired resistance (SAR). Binds DNA/RNA in a non-specific manner and exhibits endonuclease activity. Probably involved in DNA repair (PubMed:23250427). Required for both RPP8- and SSI4-mediated resistance responses, thus being involved in both TIR- and CC-NB-LRR pathways (PubMed:18191794). Involved in RNA-directed DNA methylation (RdDM) as a component of the RdDM machinery and required for gene silencing (PubMed:24799676). May also be involved in the regulation of chromatin architecture to maintain gene silencing (PubMed:22555433, PubMed:24799676).</text>
</comment>
<comment type="cofactor">
    <cofactor evidence="8">
        <name>Mg(2+)</name>
        <dbReference type="ChEBI" id="CHEBI:18420"/>
    </cofactor>
    <cofactor evidence="8">
        <name>Mn(2+)</name>
        <dbReference type="ChEBI" id="CHEBI:29035"/>
    </cofactor>
    <text evidence="8">Uses preferentially Mn(2+) and, to a lesser extent, Mg(2+) as cofactors.</text>
</comment>
<comment type="subunit">
    <text evidence="4 6 8 9 10">Homodimer and heterodimer with MORC6. Component of an RNA-directed DNA methylation (RdDM) complex that contains at least MORC6, MORC1/CRT1, MORC2, SWI3D and SUVH9. Binds directly to SUVH2 and SUVH9 (PubMed:24465213, PubMed:24799676). Interacts with the resistance proteins RCY1, RPM1, SNC1, RPP8, SSI4 and RPS2 (PubMed:18191794, PubMed:20332379). The interactions with various resistance proteins are disrupted when these resistance proteins are activated (PubMed:20332379). Interacts with the PAMP recognition receptor FLS2 (PubMed:23250427).</text>
</comment>
<comment type="subcellular location">
    <subcellularLocation>
        <location evidence="2 7 8">Nucleus</location>
    </subcellularLocation>
    <subcellularLocation>
        <location evidence="6">Endosome</location>
    </subcellularLocation>
    <text evidence="6 7 8">Present in nuclear bodies near chromocenters (PubMed:22555433). Localized in endosome-like vesicles displaying rapid cytosolic streaming (PubMed:20332379). Accumulates in the nucleus following pathogen-associated molecular pattern (PAMP) treatment or infection with an avirulent pathogen (PubMed:23250427).</text>
</comment>
<comment type="tissue specificity">
    <text evidence="4">Expressed constitutively.</text>
</comment>
<comment type="disruption phenotype">
    <text evidence="4 6 7 8 10">Loss of ATPase activity. Increased sensitivity to turnip crinkle virus (TCV) leading to spreading hypersensitive response (HR) and impaired control of viral replication and spread. Suppression of HR-like cell death induced by Pseudomonas syringae avrRpt2. Suppression of lesion formation and partial suppression of stunted growth of ssi4 mutant (PubMed:18191794). In the double mutant crt1-2 crh1-1, compromised resistance to avirulent Pseudomonas syringae and Hyaloperonospora arabidopsidis associated with compromised cytosolic calcium accumulation upon infection (PubMed:20332379). Impaired gene silencing due to decondensation of chromocenters leading to the derepression of DNA-methylated genes and transposable elements (TEs); DNA and histone methylation seems normal (PubMed:22555433, PubMed:24799676). The double mutant crt1-2 crh1-1 also exhibits an increased sensitivity to turnip crinkle virus (TCV), and reduced defense mediated by flg22 against Pseudomonas syringae (Pst). Impaired non-host resistance toward P.infestans and altered systemic acquired resistance (SAR) triggered by P.syringae pv. maculicola (Psm) AvrRpt2 cor(-). Reduced sensitivity to the DNA-damaging agent mitomycin C (PubMed:23250427).</text>
</comment>
<comment type="similarity">
    <text evidence="13">Belongs to the MORC ATPase protein family.</text>
</comment>
<comment type="sequence caution" evidence="13">
    <conflict type="erroneous initiation">
        <sequence resource="EMBL-CDS" id="BAD95165"/>
    </conflict>
    <text>Truncated N-terminus.</text>
</comment>
<comment type="sequence caution" evidence="13">
    <conflict type="erroneous gene model prediction">
        <sequence resource="EMBL-CDS" id="CAA18135"/>
    </conflict>
</comment>
<comment type="sequence caution" evidence="13">
    <conflict type="erroneous gene model prediction">
        <sequence resource="EMBL-CDS" id="CAB16854"/>
    </conflict>
</comment>
<comment type="sequence caution" evidence="13">
    <conflict type="erroneous gene model prediction">
        <sequence resource="EMBL-CDS" id="CAB80300"/>
    </conflict>
</comment>
<reference key="1">
    <citation type="journal article" date="1998" name="Nature">
        <title>Analysis of 1.9 Mb of contiguous sequence from chromosome 4 of Arabidopsis thaliana.</title>
        <authorList>
            <person name="Bevan M."/>
            <person name="Bancroft I."/>
            <person name="Bent E."/>
            <person name="Love K."/>
            <person name="Goodman H.M."/>
            <person name="Dean C."/>
            <person name="Bergkamp R."/>
            <person name="Dirkse W."/>
            <person name="van Staveren M."/>
            <person name="Stiekema W."/>
            <person name="Drost L."/>
            <person name="Ridley P."/>
            <person name="Hudson S.-A."/>
            <person name="Patel K."/>
            <person name="Murphy G."/>
            <person name="Piffanelli P."/>
            <person name="Wedler H."/>
            <person name="Wedler E."/>
            <person name="Wambutt R."/>
            <person name="Weitzenegger T."/>
            <person name="Pohl T."/>
            <person name="Terryn N."/>
            <person name="Gielen J."/>
            <person name="Villarroel R."/>
            <person name="De Clercq R."/>
            <person name="van Montagu M."/>
            <person name="Lecharny A."/>
            <person name="Aubourg S."/>
            <person name="Gy I."/>
            <person name="Kreis M."/>
            <person name="Lao N."/>
            <person name="Kavanagh T."/>
            <person name="Hempel S."/>
            <person name="Kotter P."/>
            <person name="Entian K.-D."/>
            <person name="Rieger M."/>
            <person name="Schaefer M."/>
            <person name="Funk B."/>
            <person name="Mueller-Auer S."/>
            <person name="Silvey M."/>
            <person name="James R."/>
            <person name="Monfort A."/>
            <person name="Pons A."/>
            <person name="Puigdomenech P."/>
            <person name="Douka A."/>
            <person name="Voukelatou E."/>
            <person name="Milioni D."/>
            <person name="Hatzopoulos P."/>
            <person name="Piravandi E."/>
            <person name="Obermaier B."/>
            <person name="Hilbert H."/>
            <person name="Duesterhoeft A."/>
            <person name="Moores T."/>
            <person name="Jones J.D.G."/>
            <person name="Eneva T."/>
            <person name="Palme K."/>
            <person name="Benes V."/>
            <person name="Rechmann S."/>
            <person name="Ansorge W."/>
            <person name="Cooke R."/>
            <person name="Berger C."/>
            <person name="Delseny M."/>
            <person name="Voet M."/>
            <person name="Volckaert G."/>
            <person name="Mewes H.-W."/>
            <person name="Klosterman S."/>
            <person name="Schueller C."/>
            <person name="Chalwatzis N."/>
        </authorList>
    </citation>
    <scope>NUCLEOTIDE SEQUENCE [LARGE SCALE GENOMIC DNA]</scope>
    <source>
        <strain>cv. Columbia</strain>
    </source>
</reference>
<reference key="2">
    <citation type="journal article" date="1999" name="Nature">
        <title>Sequence and analysis of chromosome 4 of the plant Arabidopsis thaliana.</title>
        <authorList>
            <person name="Mayer K.F.X."/>
            <person name="Schueller C."/>
            <person name="Wambutt R."/>
            <person name="Murphy G."/>
            <person name="Volckaert G."/>
            <person name="Pohl T."/>
            <person name="Duesterhoeft A."/>
            <person name="Stiekema W."/>
            <person name="Entian K.-D."/>
            <person name="Terryn N."/>
            <person name="Harris B."/>
            <person name="Ansorge W."/>
            <person name="Brandt P."/>
            <person name="Grivell L.A."/>
            <person name="Rieger M."/>
            <person name="Weichselgartner M."/>
            <person name="de Simone V."/>
            <person name="Obermaier B."/>
            <person name="Mache R."/>
            <person name="Mueller M."/>
            <person name="Kreis M."/>
            <person name="Delseny M."/>
            <person name="Puigdomenech P."/>
            <person name="Watson M."/>
            <person name="Schmidtheini T."/>
            <person name="Reichert B."/>
            <person name="Portetelle D."/>
            <person name="Perez-Alonso M."/>
            <person name="Boutry M."/>
            <person name="Bancroft I."/>
            <person name="Vos P."/>
            <person name="Hoheisel J."/>
            <person name="Zimmermann W."/>
            <person name="Wedler H."/>
            <person name="Ridley P."/>
            <person name="Langham S.-A."/>
            <person name="McCullagh B."/>
            <person name="Bilham L."/>
            <person name="Robben J."/>
            <person name="van der Schueren J."/>
            <person name="Grymonprez B."/>
            <person name="Chuang Y.-J."/>
            <person name="Vandenbussche F."/>
            <person name="Braeken M."/>
            <person name="Weltjens I."/>
            <person name="Voet M."/>
            <person name="Bastiaens I."/>
            <person name="Aert R."/>
            <person name="Defoor E."/>
            <person name="Weitzenegger T."/>
            <person name="Bothe G."/>
            <person name="Ramsperger U."/>
            <person name="Hilbert H."/>
            <person name="Braun M."/>
            <person name="Holzer E."/>
            <person name="Brandt A."/>
            <person name="Peters S."/>
            <person name="van Staveren M."/>
            <person name="Dirkse W."/>
            <person name="Mooijman P."/>
            <person name="Klein Lankhorst R."/>
            <person name="Rose M."/>
            <person name="Hauf J."/>
            <person name="Koetter P."/>
            <person name="Berneiser S."/>
            <person name="Hempel S."/>
            <person name="Feldpausch M."/>
            <person name="Lamberth S."/>
            <person name="Van den Daele H."/>
            <person name="De Keyser A."/>
            <person name="Buysshaert C."/>
            <person name="Gielen J."/>
            <person name="Villarroel R."/>
            <person name="De Clercq R."/>
            <person name="van Montagu M."/>
            <person name="Rogers J."/>
            <person name="Cronin A."/>
            <person name="Quail M.A."/>
            <person name="Bray-Allen S."/>
            <person name="Clark L."/>
            <person name="Doggett J."/>
            <person name="Hall S."/>
            <person name="Kay M."/>
            <person name="Lennard N."/>
            <person name="McLay K."/>
            <person name="Mayes R."/>
            <person name="Pettett A."/>
            <person name="Rajandream M.A."/>
            <person name="Lyne M."/>
            <person name="Benes V."/>
            <person name="Rechmann S."/>
            <person name="Borkova D."/>
            <person name="Bloecker H."/>
            <person name="Scharfe M."/>
            <person name="Grimm M."/>
            <person name="Loehnert T.-H."/>
            <person name="Dose S."/>
            <person name="de Haan M."/>
            <person name="Maarse A.C."/>
            <person name="Schaefer M."/>
            <person name="Mueller-Auer S."/>
            <person name="Gabel C."/>
            <person name="Fuchs M."/>
            <person name="Fartmann B."/>
            <person name="Granderath K."/>
            <person name="Dauner D."/>
            <person name="Herzl A."/>
            <person name="Neumann S."/>
            <person name="Argiriou A."/>
            <person name="Vitale D."/>
            <person name="Liguori R."/>
            <person name="Piravandi E."/>
            <person name="Massenet O."/>
            <person name="Quigley F."/>
            <person name="Clabauld G."/>
            <person name="Muendlein A."/>
            <person name="Felber R."/>
            <person name="Schnabl S."/>
            <person name="Hiller R."/>
            <person name="Schmidt W."/>
            <person name="Lecharny A."/>
            <person name="Aubourg S."/>
            <person name="Chefdor F."/>
            <person name="Cooke R."/>
            <person name="Berger C."/>
            <person name="Monfort A."/>
            <person name="Casacuberta E."/>
            <person name="Gibbons T."/>
            <person name="Weber N."/>
            <person name="Vandenbol M."/>
            <person name="Bargues M."/>
            <person name="Terol J."/>
            <person name="Torres A."/>
            <person name="Perez-Perez A."/>
            <person name="Purnelle B."/>
            <person name="Bent E."/>
            <person name="Johnson S."/>
            <person name="Tacon D."/>
            <person name="Jesse T."/>
            <person name="Heijnen L."/>
            <person name="Schwarz S."/>
            <person name="Scholler P."/>
            <person name="Heber S."/>
            <person name="Francs P."/>
            <person name="Bielke C."/>
            <person name="Frishman D."/>
            <person name="Haase D."/>
            <person name="Lemcke K."/>
            <person name="Mewes H.-W."/>
            <person name="Stocker S."/>
            <person name="Zaccaria P."/>
            <person name="Bevan M."/>
            <person name="Wilson R.K."/>
            <person name="de la Bastide M."/>
            <person name="Habermann K."/>
            <person name="Parnell L."/>
            <person name="Dedhia N."/>
            <person name="Gnoj L."/>
            <person name="Schutz K."/>
            <person name="Huang E."/>
            <person name="Spiegel L."/>
            <person name="Sekhon M."/>
            <person name="Murray J."/>
            <person name="Sheet P."/>
            <person name="Cordes M."/>
            <person name="Abu-Threideh J."/>
            <person name="Stoneking T."/>
            <person name="Kalicki J."/>
            <person name="Graves T."/>
            <person name="Harmon G."/>
            <person name="Edwards J."/>
            <person name="Latreille P."/>
            <person name="Courtney L."/>
            <person name="Cloud J."/>
            <person name="Abbott A."/>
            <person name="Scott K."/>
            <person name="Johnson D."/>
            <person name="Minx P."/>
            <person name="Bentley D."/>
            <person name="Fulton B."/>
            <person name="Miller N."/>
            <person name="Greco T."/>
            <person name="Kemp K."/>
            <person name="Kramer J."/>
            <person name="Fulton L."/>
            <person name="Mardis E."/>
            <person name="Dante M."/>
            <person name="Pepin K."/>
            <person name="Hillier L.W."/>
            <person name="Nelson J."/>
            <person name="Spieth J."/>
            <person name="Ryan E."/>
            <person name="Andrews S."/>
            <person name="Geisel C."/>
            <person name="Layman D."/>
            <person name="Du H."/>
            <person name="Ali J."/>
            <person name="Berghoff A."/>
            <person name="Jones K."/>
            <person name="Drone K."/>
            <person name="Cotton M."/>
            <person name="Joshu C."/>
            <person name="Antonoiu B."/>
            <person name="Zidanic M."/>
            <person name="Strong C."/>
            <person name="Sun H."/>
            <person name="Lamar B."/>
            <person name="Yordan C."/>
            <person name="Ma P."/>
            <person name="Zhong J."/>
            <person name="Preston R."/>
            <person name="Vil D."/>
            <person name="Shekher M."/>
            <person name="Matero A."/>
            <person name="Shah R."/>
            <person name="Swaby I.K."/>
            <person name="O'Shaughnessy A."/>
            <person name="Rodriguez M."/>
            <person name="Hoffman J."/>
            <person name="Till S."/>
            <person name="Granat S."/>
            <person name="Shohdy N."/>
            <person name="Hasegawa A."/>
            <person name="Hameed A."/>
            <person name="Lodhi M."/>
            <person name="Johnson A."/>
            <person name="Chen E."/>
            <person name="Marra M.A."/>
            <person name="Martienssen R."/>
            <person name="McCombie W.R."/>
        </authorList>
    </citation>
    <scope>NUCLEOTIDE SEQUENCE [LARGE SCALE GENOMIC DNA]</scope>
    <source>
        <strain>cv. Columbia</strain>
    </source>
</reference>
<reference key="3">
    <citation type="journal article" date="2017" name="Plant J.">
        <title>Araport11: a complete reannotation of the Arabidopsis thaliana reference genome.</title>
        <authorList>
            <person name="Cheng C.Y."/>
            <person name="Krishnakumar V."/>
            <person name="Chan A.P."/>
            <person name="Thibaud-Nissen F."/>
            <person name="Schobel S."/>
            <person name="Town C.D."/>
        </authorList>
    </citation>
    <scope>GENOME REANNOTATION</scope>
    <source>
        <strain>cv. Columbia</strain>
    </source>
</reference>
<reference key="4">
    <citation type="journal article" date="2003" name="Science">
        <title>Empirical analysis of transcriptional activity in the Arabidopsis genome.</title>
        <authorList>
            <person name="Yamada K."/>
            <person name="Lim J."/>
            <person name="Dale J.M."/>
            <person name="Chen H."/>
            <person name="Shinn P."/>
            <person name="Palm C.J."/>
            <person name="Southwick A.M."/>
            <person name="Wu H.C."/>
            <person name="Kim C.J."/>
            <person name="Nguyen M."/>
            <person name="Pham P.K."/>
            <person name="Cheuk R.F."/>
            <person name="Karlin-Newmann G."/>
            <person name="Liu S.X."/>
            <person name="Lam B."/>
            <person name="Sakano H."/>
            <person name="Wu T."/>
            <person name="Yu G."/>
            <person name="Miranda M."/>
            <person name="Quach H.L."/>
            <person name="Tripp M."/>
            <person name="Chang C.H."/>
            <person name="Lee J.M."/>
            <person name="Toriumi M.J."/>
            <person name="Chan M.M."/>
            <person name="Tang C.C."/>
            <person name="Onodera C.S."/>
            <person name="Deng J.M."/>
            <person name="Akiyama K."/>
            <person name="Ansari Y."/>
            <person name="Arakawa T."/>
            <person name="Banh J."/>
            <person name="Banno F."/>
            <person name="Bowser L."/>
            <person name="Brooks S.Y."/>
            <person name="Carninci P."/>
            <person name="Chao Q."/>
            <person name="Choy N."/>
            <person name="Enju A."/>
            <person name="Goldsmith A.D."/>
            <person name="Gurjal M."/>
            <person name="Hansen N.F."/>
            <person name="Hayashizaki Y."/>
            <person name="Johnson-Hopson C."/>
            <person name="Hsuan V.W."/>
            <person name="Iida K."/>
            <person name="Karnes M."/>
            <person name="Khan S."/>
            <person name="Koesema E."/>
            <person name="Ishida J."/>
            <person name="Jiang P.X."/>
            <person name="Jones T."/>
            <person name="Kawai J."/>
            <person name="Kamiya A."/>
            <person name="Meyers C."/>
            <person name="Nakajima M."/>
            <person name="Narusaka M."/>
            <person name="Seki M."/>
            <person name="Sakurai T."/>
            <person name="Satou M."/>
            <person name="Tamse R."/>
            <person name="Vaysberg M."/>
            <person name="Wallender E.K."/>
            <person name="Wong C."/>
            <person name="Yamamura Y."/>
            <person name="Yuan S."/>
            <person name="Shinozaki K."/>
            <person name="Davis R.W."/>
            <person name="Theologis A."/>
            <person name="Ecker J.R."/>
        </authorList>
    </citation>
    <scope>NUCLEOTIDE SEQUENCE [LARGE SCALE MRNA]</scope>
    <source>
        <strain>cv. Columbia</strain>
    </source>
</reference>
<reference key="5">
    <citation type="submission" date="2005-03" db="EMBL/GenBank/DDBJ databases">
        <title>Large-scale analysis of RIKEN Arabidopsis full-length (RAFL) cDNAs.</title>
        <authorList>
            <person name="Totoki Y."/>
            <person name="Seki M."/>
            <person name="Ishida J."/>
            <person name="Nakajima M."/>
            <person name="Enju A."/>
            <person name="Kamiya A."/>
            <person name="Narusaka M."/>
            <person name="Shin-i T."/>
            <person name="Nakagawa M."/>
            <person name="Sakamoto N."/>
            <person name="Oishi K."/>
            <person name="Kohara Y."/>
            <person name="Kobayashi M."/>
            <person name="Toyoda A."/>
            <person name="Sakaki Y."/>
            <person name="Sakurai T."/>
            <person name="Iida K."/>
            <person name="Akiyama K."/>
            <person name="Satou M."/>
            <person name="Toyoda T."/>
            <person name="Konagaya A."/>
            <person name="Carninci P."/>
            <person name="Kawai J."/>
            <person name="Hayashizaki Y."/>
            <person name="Shinozaki K."/>
        </authorList>
    </citation>
    <scope>NUCLEOTIDE SEQUENCE [LARGE SCALE MRNA] OF 409-635</scope>
    <source>
        <strain>cv. Columbia</strain>
    </source>
</reference>
<reference key="6">
    <citation type="journal article" date="2008" name="Cell Host Microbe">
        <title>R protein activation: another player revealed.</title>
        <authorList>
            <person name="Monaghan J."/>
            <person name="Li X."/>
        </authorList>
    </citation>
    <scope>REVIEW</scope>
</reference>
<reference key="7">
    <citation type="journal article" date="2008" name="Cell Host Microbe">
        <title>CRT1, an Arabidopsis ATPase that interacts with diverse resistance proteins and modulates disease resistance to turnip crinkle virus.</title>
        <authorList>
            <person name="Kang H.-G."/>
            <person name="Kuhl J.C."/>
            <person name="Kachroo P."/>
            <person name="Klessig D.F."/>
        </authorList>
    </citation>
    <scope>FUNCTION</scope>
    <scope>DISRUPTION PHENOTYPE</scope>
    <scope>INTERACTION WITH RPP8; SSI4 AND RPS2</scope>
    <scope>TISSUE SPECIFICITY</scope>
    <source>
        <strain>cv. Columbia</strain>
    </source>
</reference>
<reference key="8">
    <citation type="journal article" date="2008" name="Plant Signal. Behav.">
        <title>The involvement of the Arabidopsis CRT1 ATPase family in disease resistance protein-mediated signaling.</title>
        <authorList>
            <person name="Kang H.-G."/>
            <person name="Klessig D.F."/>
        </authorList>
    </citation>
    <scope>FUNCTION</scope>
    <scope>GENE FAMILY</scope>
    <scope>NOMENCLATURE</scope>
</reference>
<reference key="9">
    <citation type="journal article" date="2010" name="Plant Cell">
        <title>Endosome-associated CRT1 functions early in resistance gene-mediated defense signaling in Arabidopsis and tobacco.</title>
        <authorList>
            <person name="Kang H.-G."/>
            <person name="Oh C.-S."/>
            <person name="Sato M."/>
            <person name="Katagiri F."/>
            <person name="Glazebrook J."/>
            <person name="Takahashi H."/>
            <person name="Kachroo P."/>
            <person name="Martin G.B."/>
            <person name="Klessig D.F."/>
        </authorList>
    </citation>
    <scope>FUNCTION</scope>
    <scope>DISRUPTION PHENOTYPE</scope>
    <scope>SUBUNIT</scope>
    <scope>SUBCELLULAR LOCATION</scope>
    <scope>INTERACTION WITH RCY1; RPP8; RPM1 AND SNC1</scope>
</reference>
<reference key="10">
    <citation type="journal article" date="2012" name="Nat. Commun.">
        <title>CRT1 is a nuclear-translocated MORC endonuclease that participates in multiple levels of plant immunity.</title>
        <authorList>
            <person name="Kang H.-G."/>
            <person name="Hyong W.C."/>
            <person name="von Einem S."/>
            <person name="Manosalva P."/>
            <person name="Ehlers K."/>
            <person name="Liu P.-P."/>
            <person name="Buxa S.V."/>
            <person name="Moreau M."/>
            <person name="Mang H.-G."/>
            <person name="Kachroo P."/>
            <person name="Kogel K.-H."/>
            <person name="Klessig D.F."/>
        </authorList>
    </citation>
    <scope>FUNCTION</scope>
    <scope>DISRUPTION PHENOTYPE</scope>
    <scope>COFACTOR</scope>
    <scope>INTERACTION WITH FLS2</scope>
    <scope>SUBCELLULAR LOCATION</scope>
    <source>
        <strain>cv. Columbia</strain>
    </source>
</reference>
<reference key="11">
    <citation type="journal article" date="2012" name="Science">
        <title>MORC family ATPases required for heterochromatin condensation and gene silencing.</title>
        <authorList>
            <person name="Moissiard G."/>
            <person name="Cokus S.J."/>
            <person name="Cary J."/>
            <person name="Feng S."/>
            <person name="Billi A.C."/>
            <person name="Stroud H."/>
            <person name="Husmann D."/>
            <person name="Zhan Y."/>
            <person name="Lajoie B.R."/>
            <person name="McCord R.P."/>
            <person name="Hale C.J."/>
            <person name="Feng W."/>
            <person name="Michaels S.D."/>
            <person name="Frand A.R."/>
            <person name="Pellegrini M."/>
            <person name="Dekker J."/>
            <person name="Kim J.K."/>
            <person name="Jacobsen S.E."/>
        </authorList>
    </citation>
    <scope>FUNCTION</scope>
    <scope>DISRUPTION PHENOTYPE</scope>
    <scope>SUBCELLULAR LOCATION</scope>
    <source>
        <strain>cv. Columbia</strain>
    </source>
</reference>
<reference key="12">
    <citation type="journal article" date="2014" name="PLoS Genet.">
        <title>The SET domain proteins SUVH2 and SUVH9 are required for Pol V occupancy at RNA-directed DNA methylation loci.</title>
        <authorList>
            <person name="Liu Z.-W."/>
            <person name="Shao C.-R."/>
            <person name="Zhang C.-J."/>
            <person name="Zhou J.-X."/>
            <person name="Zhang S.-W."/>
            <person name="Li L."/>
            <person name="Chen S."/>
            <person name="Huang H.-W."/>
            <person name="Cai T."/>
            <person name="He X.-J."/>
        </authorList>
    </citation>
    <scope>SUBUNIT</scope>
    <scope>INTERACTION WITH MORC6; SUVH9 AND SUVH2</scope>
</reference>
<reference key="13">
    <citation type="journal article" date="2014" name="Proc. Natl. Acad. Sci. U.S.A.">
        <title>Transcriptional gene silencing by Arabidopsis microrchidia homologues involves the formation of heteromers.</title>
        <authorList>
            <person name="Moissiard G."/>
            <person name="Bischof S."/>
            <person name="Husmann D."/>
            <person name="Pastor W.A."/>
            <person name="Hale C.J."/>
            <person name="Yen L."/>
            <person name="Stroud H."/>
            <person name="Papikian A."/>
            <person name="Vashisht A.A."/>
            <person name="Wohlschlegel J.A."/>
            <person name="Jacobsen S.E."/>
        </authorList>
    </citation>
    <scope>FUNCTION</scope>
    <scope>DISRUPTION PHENOTYPE</scope>
    <scope>INTERACTION WITH MORC6</scope>
    <scope>GENE FAMILY</scope>
    <scope>NOMENCLATURE</scope>
</reference>
<name>MORC1_ARATH</name>
<dbReference type="EC" id="3.6.-.-" evidence="4"/>
<dbReference type="EMBL" id="Z99708">
    <property type="protein sequence ID" value="CAB16854.1"/>
    <property type="status" value="ALT_SEQ"/>
    <property type="molecule type" value="Genomic_DNA"/>
</dbReference>
<dbReference type="EMBL" id="AL022141">
    <property type="protein sequence ID" value="CAA18135.1"/>
    <property type="status" value="ALT_SEQ"/>
    <property type="molecule type" value="Genomic_DNA"/>
</dbReference>
<dbReference type="EMBL" id="AL161589">
    <property type="protein sequence ID" value="CAB80300.1"/>
    <property type="status" value="ALT_SEQ"/>
    <property type="molecule type" value="Genomic_DNA"/>
</dbReference>
<dbReference type="EMBL" id="CP002687">
    <property type="protein sequence ID" value="AEE86644.1"/>
    <property type="molecule type" value="Genomic_DNA"/>
</dbReference>
<dbReference type="EMBL" id="AF360314">
    <property type="protein sequence ID" value="AAK26024.1"/>
    <property type="molecule type" value="mRNA"/>
</dbReference>
<dbReference type="EMBL" id="BT001940">
    <property type="protein sequence ID" value="AAN71939.1"/>
    <property type="molecule type" value="mRNA"/>
</dbReference>
<dbReference type="EMBL" id="AK222136">
    <property type="protein sequence ID" value="BAD95165.1"/>
    <property type="status" value="ALT_INIT"/>
    <property type="molecule type" value="mRNA"/>
</dbReference>
<dbReference type="PIR" id="T04598">
    <property type="entry name" value="T04598"/>
</dbReference>
<dbReference type="RefSeq" id="NP_568000.1">
    <property type="nucleotide sequence ID" value="NM_119797.4"/>
</dbReference>
<dbReference type="SMR" id="Q84WV6"/>
<dbReference type="DIP" id="DIP-59357N"/>
<dbReference type="FunCoup" id="Q84WV6">
    <property type="interactions" value="2661"/>
</dbReference>
<dbReference type="IntAct" id="Q84WV6">
    <property type="interactions" value="4"/>
</dbReference>
<dbReference type="STRING" id="3702.Q84WV6"/>
<dbReference type="PaxDb" id="3702-AT4G36290.1"/>
<dbReference type="ProteomicsDB" id="250881"/>
<dbReference type="DNASU" id="829786"/>
<dbReference type="EnsemblPlants" id="AT4G36290.1">
    <property type="protein sequence ID" value="AT4G36290.1"/>
    <property type="gene ID" value="AT4G36290"/>
</dbReference>
<dbReference type="GeneID" id="829786"/>
<dbReference type="Gramene" id="AT4G36290.1">
    <property type="protein sequence ID" value="AT4G36290.1"/>
    <property type="gene ID" value="AT4G36290"/>
</dbReference>
<dbReference type="KEGG" id="ath:AT4G36290"/>
<dbReference type="Araport" id="AT4G36290"/>
<dbReference type="TAIR" id="AT4G36290">
    <property type="gene designation" value="CRT1"/>
</dbReference>
<dbReference type="eggNOG" id="KOG1845">
    <property type="taxonomic scope" value="Eukaryota"/>
</dbReference>
<dbReference type="HOGENOM" id="CLU_011516_4_1_1"/>
<dbReference type="InParanoid" id="Q84WV6"/>
<dbReference type="OMA" id="RHPETIM"/>
<dbReference type="PhylomeDB" id="Q84WV6"/>
<dbReference type="PRO" id="PR:Q84WV6"/>
<dbReference type="Proteomes" id="UP000006548">
    <property type="component" value="Chromosome 4"/>
</dbReference>
<dbReference type="ExpressionAtlas" id="Q84WV6">
    <property type="expression patterns" value="baseline and differential"/>
</dbReference>
<dbReference type="GO" id="GO:0005768">
    <property type="term" value="C:endosome"/>
    <property type="evidence" value="ECO:0000314"/>
    <property type="project" value="TAIR"/>
</dbReference>
<dbReference type="GO" id="GO:0005634">
    <property type="term" value="C:nucleus"/>
    <property type="evidence" value="ECO:0000314"/>
    <property type="project" value="UniProtKB"/>
</dbReference>
<dbReference type="GO" id="GO:0005524">
    <property type="term" value="F:ATP binding"/>
    <property type="evidence" value="ECO:0007669"/>
    <property type="project" value="UniProtKB-KW"/>
</dbReference>
<dbReference type="GO" id="GO:0016887">
    <property type="term" value="F:ATP hydrolysis activity"/>
    <property type="evidence" value="ECO:0000314"/>
    <property type="project" value="UniProtKB"/>
</dbReference>
<dbReference type="GO" id="GO:0003677">
    <property type="term" value="F:DNA binding"/>
    <property type="evidence" value="ECO:0000314"/>
    <property type="project" value="UniProtKB"/>
</dbReference>
<dbReference type="GO" id="GO:0004519">
    <property type="term" value="F:endonuclease activity"/>
    <property type="evidence" value="ECO:0000314"/>
    <property type="project" value="UniProtKB"/>
</dbReference>
<dbReference type="GO" id="GO:0003723">
    <property type="term" value="F:RNA binding"/>
    <property type="evidence" value="ECO:0000314"/>
    <property type="project" value="UniProtKB"/>
</dbReference>
<dbReference type="GO" id="GO:0006325">
    <property type="term" value="P:chromatin organization"/>
    <property type="evidence" value="ECO:0007669"/>
    <property type="project" value="UniProtKB-KW"/>
</dbReference>
<dbReference type="GO" id="GO:0051607">
    <property type="term" value="P:defense response to virus"/>
    <property type="evidence" value="ECO:0000315"/>
    <property type="project" value="UniProtKB"/>
</dbReference>
<dbReference type="GO" id="GO:0006281">
    <property type="term" value="P:DNA repair"/>
    <property type="evidence" value="ECO:0007669"/>
    <property type="project" value="UniProtKB-KW"/>
</dbReference>
<dbReference type="GO" id="GO:0009626">
    <property type="term" value="P:plant-type hypersensitive response"/>
    <property type="evidence" value="ECO:0000315"/>
    <property type="project" value="TAIR"/>
</dbReference>
<dbReference type="GO" id="GO:1900426">
    <property type="term" value="P:positive regulation of defense response to bacterium"/>
    <property type="evidence" value="ECO:0000315"/>
    <property type="project" value="UniProtKB"/>
</dbReference>
<dbReference type="GO" id="GO:0002230">
    <property type="term" value="P:positive regulation of defense response to virus by host"/>
    <property type="evidence" value="ECO:0000315"/>
    <property type="project" value="UniProtKB"/>
</dbReference>
<dbReference type="GO" id="GO:0034052">
    <property type="term" value="P:positive regulation of plant-type hypersensitive response"/>
    <property type="evidence" value="ECO:0000315"/>
    <property type="project" value="UniProtKB"/>
</dbReference>
<dbReference type="GO" id="GO:1901672">
    <property type="term" value="P:positive regulation of systemic acquired resistance"/>
    <property type="evidence" value="ECO:0000315"/>
    <property type="project" value="UniProtKB"/>
</dbReference>
<dbReference type="GO" id="GO:0006282">
    <property type="term" value="P:regulation of DNA repair"/>
    <property type="evidence" value="ECO:0000315"/>
    <property type="project" value="UniProtKB"/>
</dbReference>
<dbReference type="GO" id="GO:0031047">
    <property type="term" value="P:regulatory ncRNA-mediated gene silencing"/>
    <property type="evidence" value="ECO:0007669"/>
    <property type="project" value="UniProtKB-KW"/>
</dbReference>
<dbReference type="FunFam" id="3.30.565.10:FF:000075">
    <property type="entry name" value="MORC family CW-type zinc finger protein 4"/>
    <property type="match status" value="1"/>
</dbReference>
<dbReference type="Gene3D" id="3.30.565.10">
    <property type="entry name" value="Histidine kinase-like ATPase, C-terminal domain"/>
    <property type="match status" value="1"/>
</dbReference>
<dbReference type="InterPro" id="IPR036890">
    <property type="entry name" value="HATPase_C_sf"/>
</dbReference>
<dbReference type="InterPro" id="IPR045261">
    <property type="entry name" value="MORC_ATPase"/>
</dbReference>
<dbReference type="InterPro" id="IPR041006">
    <property type="entry name" value="Morc_S5"/>
</dbReference>
<dbReference type="PANTHER" id="PTHR23336:SF50">
    <property type="entry name" value="PROTEIN MICRORCHIDIA 1-RELATED"/>
    <property type="match status" value="1"/>
</dbReference>
<dbReference type="PANTHER" id="PTHR23336">
    <property type="entry name" value="ZINC FINGER CW-TYPE COILED-COIL DOMAIN PROTEIN 3"/>
    <property type="match status" value="1"/>
</dbReference>
<dbReference type="Pfam" id="PF13589">
    <property type="entry name" value="HATPase_c_3"/>
    <property type="match status" value="1"/>
</dbReference>
<dbReference type="Pfam" id="PF17942">
    <property type="entry name" value="Morc6_S5"/>
    <property type="match status" value="1"/>
</dbReference>
<dbReference type="SUPFAM" id="SSF55874">
    <property type="entry name" value="ATPase domain of HSP90 chaperone/DNA topoisomerase II/histidine kinase"/>
    <property type="match status" value="1"/>
</dbReference>
<proteinExistence type="evidence at protein level"/>
<protein>
    <recommendedName>
        <fullName evidence="12">Protein MICRORCHIDIA 1</fullName>
        <shortName evidence="12">AtMORC1</shortName>
        <ecNumber evidence="4">3.6.-.-</ecNumber>
    </recommendedName>
    <alternativeName>
        <fullName evidence="11">Protein COMPROMISED RECOGNITION OF TCV 1</fullName>
    </alternativeName>
</protein>
<feature type="chain" id="PRO_0000434976" description="Protein MICRORCHIDIA 1">
    <location>
        <begin position="1"/>
        <end position="635"/>
    </location>
</feature>
<feature type="region of interest" description="Disordered" evidence="3">
    <location>
        <begin position="491"/>
        <end position="511"/>
    </location>
</feature>
<feature type="coiled-coil region" evidence="1">
    <location>
        <begin position="588"/>
        <end position="635"/>
    </location>
</feature>
<feature type="sequence conflict" description="In Ref. 4; AAK26024." evidence="13" ref="4">
    <original>T</original>
    <variation>I</variation>
    <location>
        <position position="77"/>
    </location>
</feature>
<keyword id="KW-0067">ATP-binding</keyword>
<keyword id="KW-0156">Chromatin regulator</keyword>
<keyword id="KW-0175">Coiled coil</keyword>
<keyword id="KW-0227">DNA damage</keyword>
<keyword id="KW-0234">DNA repair</keyword>
<keyword id="KW-0238">DNA-binding</keyword>
<keyword id="KW-0255">Endonuclease</keyword>
<keyword id="KW-0967">Endosome</keyword>
<keyword id="KW-0378">Hydrolase</keyword>
<keyword id="KW-0381">Hypersensitive response</keyword>
<keyword id="KW-0540">Nuclease</keyword>
<keyword id="KW-0547">Nucleotide-binding</keyword>
<keyword id="KW-0539">Nucleus</keyword>
<keyword id="KW-0611">Plant defense</keyword>
<keyword id="KW-1185">Reference proteome</keyword>
<keyword id="KW-0694">RNA-binding</keyword>
<keyword id="KW-0943">RNA-mediated gene silencing</keyword>
<sequence>MAKNYTVADVVNIDSDSDSDDDNGGVIGMVPSLASLIENQKVSIADAATVAPRETLECRSFWKAGENFVIPSSVTLTAIGMVEHARVHPKFLHSNATSHKWAFGAIAELLDNAVDEIQNGATVVKIDKINIVKDNTPALVFQDNGGGMDPNGIRKCMSLGYSSKKSNTTIGQYGNGFKTSTMRLGADAMVFSRSTRGGKSTQSIGLLSYTFLRKTGQDDVIVPMIDFDISSDSPQPIIYGSPGDWSTNLNILLKWSPFSTMVELLQQFEDIGTHGTKVIIYNLWLNDEGIYELSFDDDDVDIRLRDENAQDGKRLHAKTLEVRSHISYRYRHSLRAYISMLYLKKFKNFKIILRGVSVAQFNIADEFRHPETIMYKPQAAAVDYAATGIKVGFIKEAPKLPICGFNVYHKNRLIRPFWKVVLEGSTRGNGVMGVLEANFIEPAHDKQDFERSSLFLRLEARLKRITSDYWQNHCHIFGYQTAQIPADKSKRTVIPDQPPTVNTYNPSPLPSDRISHGGPIIREINLSNATSSRTAAVAAPHLRNYTGLRNNFQPVQLNPQPPAAGDTGNNLVGKLAAEIREENLQLFMRCEEYVKKENEVEQTVKSLEKELEEIKSKCAQLALLVDAKKKEMQQV</sequence>
<evidence type="ECO:0000255" key="1"/>
<evidence type="ECO:0000255" key="2">
    <source>
        <dbReference type="PROSITE-ProRule" id="PRU00768"/>
    </source>
</evidence>
<evidence type="ECO:0000256" key="3">
    <source>
        <dbReference type="SAM" id="MobiDB-lite"/>
    </source>
</evidence>
<evidence type="ECO:0000269" key="4">
    <source>
    </source>
</evidence>
<evidence type="ECO:0000269" key="5">
    <source>
    </source>
</evidence>
<evidence type="ECO:0000269" key="6">
    <source>
    </source>
</evidence>
<evidence type="ECO:0000269" key="7">
    <source>
    </source>
</evidence>
<evidence type="ECO:0000269" key="8">
    <source>
    </source>
</evidence>
<evidence type="ECO:0000269" key="9">
    <source>
    </source>
</evidence>
<evidence type="ECO:0000269" key="10">
    <source>
    </source>
</evidence>
<evidence type="ECO:0000303" key="11">
    <source>
    </source>
</evidence>
<evidence type="ECO:0000303" key="12">
    <source>
    </source>
</evidence>
<evidence type="ECO:0000305" key="13"/>
<evidence type="ECO:0000312" key="14">
    <source>
        <dbReference type="Araport" id="AT4G36290"/>
    </source>
</evidence>
<evidence type="ECO:0000312" key="15">
    <source>
        <dbReference type="EMBL" id="AAN71939.1"/>
    </source>
</evidence>
<evidence type="ECO:0000312" key="16">
    <source>
        <dbReference type="EMBL" id="CAA18135.1"/>
    </source>
</evidence>
<evidence type="ECO:0000312" key="17">
    <source>
        <dbReference type="EMBL" id="CAB16854.1"/>
    </source>
</evidence>